<feature type="chain" id="PRO_0000391243" description="NADH-quinone oxidoreductase subunit N">
    <location>
        <begin position="1"/>
        <end position="483"/>
    </location>
</feature>
<feature type="transmembrane region" description="Helical" evidence="1">
    <location>
        <begin position="13"/>
        <end position="33"/>
    </location>
</feature>
<feature type="transmembrane region" description="Helical" evidence="1">
    <location>
        <begin position="39"/>
        <end position="57"/>
    </location>
</feature>
<feature type="transmembrane region" description="Helical" evidence="1">
    <location>
        <begin position="76"/>
        <end position="96"/>
    </location>
</feature>
<feature type="transmembrane region" description="Helical" evidence="1">
    <location>
        <begin position="110"/>
        <end position="130"/>
    </location>
</feature>
<feature type="transmembrane region" description="Helical" evidence="1">
    <location>
        <begin position="131"/>
        <end position="151"/>
    </location>
</feature>
<feature type="transmembrane region" description="Helical" evidence="1">
    <location>
        <begin position="165"/>
        <end position="185"/>
    </location>
</feature>
<feature type="transmembrane region" description="Helical" evidence="1">
    <location>
        <begin position="206"/>
        <end position="226"/>
    </location>
</feature>
<feature type="transmembrane region" description="Helical" evidence="1">
    <location>
        <begin position="240"/>
        <end position="260"/>
    </location>
</feature>
<feature type="transmembrane region" description="Helical" evidence="1">
    <location>
        <begin position="277"/>
        <end position="297"/>
    </location>
</feature>
<feature type="transmembrane region" description="Helical" evidence="1">
    <location>
        <begin position="302"/>
        <end position="322"/>
    </location>
</feature>
<feature type="transmembrane region" description="Helical" evidence="1">
    <location>
        <begin position="330"/>
        <end position="350"/>
    </location>
</feature>
<feature type="transmembrane region" description="Helical" evidence="1">
    <location>
        <begin position="373"/>
        <end position="393"/>
    </location>
</feature>
<feature type="transmembrane region" description="Helical" evidence="1">
    <location>
        <begin position="406"/>
        <end position="426"/>
    </location>
</feature>
<feature type="transmembrane region" description="Helical" evidence="1">
    <location>
        <begin position="459"/>
        <end position="479"/>
    </location>
</feature>
<comment type="function">
    <text evidence="1">NDH-1 shuttles electrons from NADH, via FMN and iron-sulfur (Fe-S) centers, to quinones in the respiratory chain. The immediate electron acceptor for the enzyme in this species is believed to be ubiquinone. Couples the redox reaction to proton translocation (for every two electrons transferred, four hydrogen ions are translocated across the cytoplasmic membrane), and thus conserves the redox energy in a proton gradient.</text>
</comment>
<comment type="catalytic activity">
    <reaction evidence="1">
        <text>a quinone + NADH + 5 H(+)(in) = a quinol + NAD(+) + 4 H(+)(out)</text>
        <dbReference type="Rhea" id="RHEA:57888"/>
        <dbReference type="ChEBI" id="CHEBI:15378"/>
        <dbReference type="ChEBI" id="CHEBI:24646"/>
        <dbReference type="ChEBI" id="CHEBI:57540"/>
        <dbReference type="ChEBI" id="CHEBI:57945"/>
        <dbReference type="ChEBI" id="CHEBI:132124"/>
    </reaction>
</comment>
<comment type="subunit">
    <text evidence="1">NDH-1 is composed of 14 different subunits. Subunits NuoA, H, J, K, L, M, N constitute the membrane sector of the complex.</text>
</comment>
<comment type="subcellular location">
    <subcellularLocation>
        <location evidence="1">Cell inner membrane</location>
        <topology evidence="1">Multi-pass membrane protein</topology>
    </subcellularLocation>
</comment>
<comment type="similarity">
    <text evidence="1">Belongs to the complex I subunit 2 family.</text>
</comment>
<gene>
    <name evidence="1" type="primary">nuoN</name>
    <name type="ordered locus">Tbd_1155</name>
</gene>
<reference key="1">
    <citation type="journal article" date="2006" name="J. Bacteriol.">
        <title>The genome sequence of the obligately chemolithoautotrophic, facultatively anaerobic bacterium Thiobacillus denitrificans.</title>
        <authorList>
            <person name="Beller H.R."/>
            <person name="Chain P.S."/>
            <person name="Letain T.E."/>
            <person name="Chakicherla A."/>
            <person name="Larimer F.W."/>
            <person name="Richardson P.M."/>
            <person name="Coleman M.A."/>
            <person name="Wood A.P."/>
            <person name="Kelly D.P."/>
        </authorList>
    </citation>
    <scope>NUCLEOTIDE SEQUENCE [LARGE SCALE GENOMIC DNA]</scope>
    <source>
        <strain>ATCC 25259 / T1</strain>
    </source>
</reference>
<proteinExistence type="inferred from homology"/>
<dbReference type="EC" id="7.1.1.-" evidence="1"/>
<dbReference type="EMBL" id="CP000116">
    <property type="protein sequence ID" value="AAZ97108.1"/>
    <property type="molecule type" value="Genomic_DNA"/>
</dbReference>
<dbReference type="RefSeq" id="WP_011311667.1">
    <property type="nucleotide sequence ID" value="NC_007404.1"/>
</dbReference>
<dbReference type="SMR" id="Q3SJP4"/>
<dbReference type="STRING" id="292415.Tbd_1155"/>
<dbReference type="KEGG" id="tbd:Tbd_1155"/>
<dbReference type="eggNOG" id="COG1007">
    <property type="taxonomic scope" value="Bacteria"/>
</dbReference>
<dbReference type="HOGENOM" id="CLU_007100_1_3_4"/>
<dbReference type="OrthoDB" id="9768329at2"/>
<dbReference type="Proteomes" id="UP000008291">
    <property type="component" value="Chromosome"/>
</dbReference>
<dbReference type="GO" id="GO:0005886">
    <property type="term" value="C:plasma membrane"/>
    <property type="evidence" value="ECO:0007669"/>
    <property type="project" value="UniProtKB-SubCell"/>
</dbReference>
<dbReference type="GO" id="GO:0008137">
    <property type="term" value="F:NADH dehydrogenase (ubiquinone) activity"/>
    <property type="evidence" value="ECO:0007669"/>
    <property type="project" value="InterPro"/>
</dbReference>
<dbReference type="GO" id="GO:0050136">
    <property type="term" value="F:NADH:ubiquinone reductase (non-electrogenic) activity"/>
    <property type="evidence" value="ECO:0007669"/>
    <property type="project" value="UniProtKB-UniRule"/>
</dbReference>
<dbReference type="GO" id="GO:0048038">
    <property type="term" value="F:quinone binding"/>
    <property type="evidence" value="ECO:0007669"/>
    <property type="project" value="UniProtKB-KW"/>
</dbReference>
<dbReference type="GO" id="GO:0042773">
    <property type="term" value="P:ATP synthesis coupled electron transport"/>
    <property type="evidence" value="ECO:0007669"/>
    <property type="project" value="InterPro"/>
</dbReference>
<dbReference type="HAMAP" id="MF_00445">
    <property type="entry name" value="NDH1_NuoN_1"/>
    <property type="match status" value="1"/>
</dbReference>
<dbReference type="InterPro" id="IPR010096">
    <property type="entry name" value="NADH-Q_OxRdtase_suN/2"/>
</dbReference>
<dbReference type="InterPro" id="IPR001750">
    <property type="entry name" value="ND/Mrp_TM"/>
</dbReference>
<dbReference type="NCBIfam" id="TIGR01770">
    <property type="entry name" value="NDH_I_N"/>
    <property type="match status" value="1"/>
</dbReference>
<dbReference type="NCBIfam" id="NF004442">
    <property type="entry name" value="PRK05777.1-5"/>
    <property type="match status" value="1"/>
</dbReference>
<dbReference type="PANTHER" id="PTHR22773">
    <property type="entry name" value="NADH DEHYDROGENASE"/>
    <property type="match status" value="1"/>
</dbReference>
<dbReference type="Pfam" id="PF00361">
    <property type="entry name" value="Proton_antipo_M"/>
    <property type="match status" value="1"/>
</dbReference>
<dbReference type="PRINTS" id="PR01434">
    <property type="entry name" value="NADHDHGNASE5"/>
</dbReference>
<accession>Q3SJP4</accession>
<keyword id="KW-0997">Cell inner membrane</keyword>
<keyword id="KW-1003">Cell membrane</keyword>
<keyword id="KW-0472">Membrane</keyword>
<keyword id="KW-0520">NAD</keyword>
<keyword id="KW-0874">Quinone</keyword>
<keyword id="KW-1185">Reference proteome</keyword>
<keyword id="KW-1278">Translocase</keyword>
<keyword id="KW-0812">Transmembrane</keyword>
<keyword id="KW-1133">Transmembrane helix</keyword>
<keyword id="KW-0813">Transport</keyword>
<keyword id="KW-0830">Ubiquinone</keyword>
<protein>
    <recommendedName>
        <fullName evidence="1">NADH-quinone oxidoreductase subunit N</fullName>
        <ecNumber evidence="1">7.1.1.-</ecNumber>
    </recommendedName>
    <alternativeName>
        <fullName evidence="1">NADH dehydrogenase I subunit N</fullName>
    </alternativeName>
    <alternativeName>
        <fullName evidence="1">NDH-1 subunit N</fullName>
    </alternativeName>
</protein>
<sequence>MNMPLSLMQFAPALPEIFVLAMVSLILVIDAAVGDGKRYLAYGLSLVTLAGAAFLTVRDFSTLPVLALGGLFIDDPLSDVLKLFLYLTVAIVLVYSRDYLRVRGLYKGEFFVLALFALLGMMVMVSASHFLTLYLGLELLSLSLYAMVALQRDSSVATEAAMKYFVLGALASGMLLYGMSMVYGVTGSLALGDIAIVLQDGTDLRIPLVFGIVFVVAGLAFKLGAVPFHMWVPDVYHGAPTAMTLFVGSAPKIAAFAFVVRVLGQGLESQVSEWRDMLVILAVLSMAIGNIAAIAQSNLKRMFAYSTISHMGFMLLGVLAGSQNGYGAAMFYVLVYTLMTLGGFGMILLLSRAGFESDRLDDFKGLNRRSPWLAFVMLLLMFSMTGIPPTVGFYAKLAVLQAVVEIGYVWLAVAAVLFSLVGAFYYLRIVKLMYFDTPQDTAPIAPGIDARLLMSANGLAVLALGILPQPLMAVCVQAIGTSF</sequence>
<name>NUON_THIDA</name>
<organism>
    <name type="scientific">Thiobacillus denitrificans (strain ATCC 25259 / T1)</name>
    <dbReference type="NCBI Taxonomy" id="292415"/>
    <lineage>
        <taxon>Bacteria</taxon>
        <taxon>Pseudomonadati</taxon>
        <taxon>Pseudomonadota</taxon>
        <taxon>Betaproteobacteria</taxon>
        <taxon>Nitrosomonadales</taxon>
        <taxon>Thiobacillaceae</taxon>
        <taxon>Thiobacillus</taxon>
    </lineage>
</organism>
<evidence type="ECO:0000255" key="1">
    <source>
        <dbReference type="HAMAP-Rule" id="MF_00445"/>
    </source>
</evidence>